<name>NIFW_AZOC5</name>
<comment type="function">
    <text evidence="1">May protect the nitrogenase Fe-Mo protein from oxidative damage.</text>
</comment>
<comment type="subunit">
    <text evidence="1">Homotrimer; associates with NifD.</text>
</comment>
<comment type="similarity">
    <text evidence="2">Belongs to the NifW family.</text>
</comment>
<accession>P26481</accession>
<accession>A8IIT1</accession>
<gene>
    <name type="primary">nifW</name>
    <name type="synonym">nifO</name>
    <name type="ordered locus">AZC_3446</name>
</gene>
<reference key="1">
    <citation type="journal article" date="1988" name="Mol. Gen. Genet.">
        <title>Characterization of the fixABC region of Azorhizobium caulinodans ORS571 and identification of a new nitrogen fixation gene.</title>
        <authorList>
            <person name="Kaminski P.A."/>
            <person name="Norel F."/>
            <person name="Desnoues N."/>
            <person name="Kush A."/>
            <person name="Salzano G."/>
            <person name="Elmerich C."/>
        </authorList>
    </citation>
    <scope>NUCLEOTIDE SEQUENCE [GENOMIC DNA]</scope>
</reference>
<reference key="2">
    <citation type="submission" date="2007-04" db="EMBL/GenBank/DDBJ databases">
        <title>Complete genome sequence of the nitrogen-fixing bacterium Azorhizobium caulinodans ORS571.</title>
        <authorList>
            <person name="Lee K.B."/>
            <person name="Backer P.D."/>
            <person name="Aono T."/>
            <person name="Liu C.T."/>
            <person name="Suzuki S."/>
            <person name="Suzuki T."/>
            <person name="Kaneko T."/>
            <person name="Yamada M."/>
            <person name="Tabata S."/>
            <person name="Kupfer D.M."/>
            <person name="Najar F.Z."/>
            <person name="Wiley G.B."/>
            <person name="Roe B."/>
            <person name="Binnewies T."/>
            <person name="Ussery D."/>
            <person name="Vereecke D."/>
            <person name="Gevers D."/>
            <person name="Holsters M."/>
            <person name="Oyaizu H."/>
        </authorList>
    </citation>
    <scope>NUCLEOTIDE SEQUENCE [LARGE SCALE GENOMIC DNA]</scope>
    <source>
        <strain>ATCC 43989 / DSM 5975 / JCM 20966 / LMG 6465 / NBRC 14845 / NCIMB 13405 / ORS 571</strain>
    </source>
</reference>
<organism>
    <name type="scientific">Azorhizobium caulinodans (strain ATCC 43989 / DSM 5975 / JCM 20966 / LMG 6465 / NBRC 14845 / NCIMB 13405 / ORS 571)</name>
    <dbReference type="NCBI Taxonomy" id="438753"/>
    <lineage>
        <taxon>Bacteria</taxon>
        <taxon>Pseudomonadati</taxon>
        <taxon>Pseudomonadota</taxon>
        <taxon>Alphaproteobacteria</taxon>
        <taxon>Hyphomicrobiales</taxon>
        <taxon>Xanthobacteraceae</taxon>
        <taxon>Azorhizobium</taxon>
    </lineage>
</organism>
<sequence length="109" mass="12150">MATAGGILDQLNKASSAEDFFALLEVDYDPQVVNVVRLHILRRMGQYLVSENFEGQADDAIRARCKEVLEQAYADFLASSPLQERVFKVLKEAAQPPKPKPMVSLTVLK</sequence>
<protein>
    <recommendedName>
        <fullName>Nitrogenase-stabilizing/protective protein NifW</fullName>
    </recommendedName>
</protein>
<feature type="chain" id="PRO_0000219526" description="Nitrogenase-stabilizing/protective protein NifW">
    <location>
        <begin position="1"/>
        <end position="109"/>
    </location>
</feature>
<keyword id="KW-0535">Nitrogen fixation</keyword>
<keyword id="KW-1185">Reference proteome</keyword>
<evidence type="ECO:0000250" key="1"/>
<evidence type="ECO:0000305" key="2"/>
<dbReference type="EMBL" id="M35122">
    <property type="protein sequence ID" value="AAA26188.1"/>
    <property type="molecule type" value="Genomic_DNA"/>
</dbReference>
<dbReference type="EMBL" id="AP009384">
    <property type="protein sequence ID" value="BAF89444.1"/>
    <property type="molecule type" value="Genomic_DNA"/>
</dbReference>
<dbReference type="PIR" id="S29387">
    <property type="entry name" value="S29387"/>
</dbReference>
<dbReference type="RefSeq" id="WP_012171969.1">
    <property type="nucleotide sequence ID" value="NC_009937.1"/>
</dbReference>
<dbReference type="SMR" id="P26481"/>
<dbReference type="STRING" id="438753.AZC_3446"/>
<dbReference type="KEGG" id="azc:AZC_3446"/>
<dbReference type="eggNOG" id="ENOG50330W8">
    <property type="taxonomic scope" value="Bacteria"/>
</dbReference>
<dbReference type="HOGENOM" id="CLU_145318_0_0_5"/>
<dbReference type="Proteomes" id="UP000000270">
    <property type="component" value="Chromosome"/>
</dbReference>
<dbReference type="GO" id="GO:0009399">
    <property type="term" value="P:nitrogen fixation"/>
    <property type="evidence" value="ECO:0007669"/>
    <property type="project" value="UniProtKB-UniRule"/>
</dbReference>
<dbReference type="HAMAP" id="MF_00529">
    <property type="entry name" value="NifW"/>
    <property type="match status" value="1"/>
</dbReference>
<dbReference type="InterPro" id="IPR004893">
    <property type="entry name" value="NifW"/>
</dbReference>
<dbReference type="NCBIfam" id="NF002009">
    <property type="entry name" value="PRK00810.1"/>
    <property type="match status" value="1"/>
</dbReference>
<dbReference type="Pfam" id="PF03206">
    <property type="entry name" value="NifW"/>
    <property type="match status" value="1"/>
</dbReference>
<dbReference type="PIRSF" id="PIRSF005790">
    <property type="entry name" value="NifW"/>
    <property type="match status" value="1"/>
</dbReference>
<proteinExistence type="inferred from homology"/>